<accession>Q96FJ2</accession>
<accession>B2R5B4</accession>
<protein>
    <recommendedName>
        <fullName>Dynein light chain 2, cytoplasmic</fullName>
    </recommendedName>
    <alternativeName>
        <fullName>8 kDa dynein light chain b</fullName>
        <shortName>DLC8b</shortName>
    </alternativeName>
    <alternativeName>
        <fullName>Dynein light chain LC8-type 2</fullName>
    </alternativeName>
</protein>
<sequence>MSDRKAVIKNADMSEDMQQDAVDCATQAMEKYNIEKDIAAYIKKEFDKKYNPTWHCIVGRNFGSYVTHETKHFIYFYLGQVAILLFKSG</sequence>
<name>DYL2_HUMAN</name>
<organism>
    <name type="scientific">Homo sapiens</name>
    <name type="common">Human</name>
    <dbReference type="NCBI Taxonomy" id="9606"/>
    <lineage>
        <taxon>Eukaryota</taxon>
        <taxon>Metazoa</taxon>
        <taxon>Chordata</taxon>
        <taxon>Craniata</taxon>
        <taxon>Vertebrata</taxon>
        <taxon>Euteleostomi</taxon>
        <taxon>Mammalia</taxon>
        <taxon>Eutheria</taxon>
        <taxon>Euarchontoglires</taxon>
        <taxon>Primates</taxon>
        <taxon>Haplorrhini</taxon>
        <taxon>Catarrhini</taxon>
        <taxon>Hominidae</taxon>
        <taxon>Homo</taxon>
    </lineage>
</organism>
<keyword id="KW-0002">3D-structure</keyword>
<keyword id="KW-0963">Cytoplasm</keyword>
<keyword id="KW-0206">Cytoskeleton</keyword>
<keyword id="KW-0243">Dynein</keyword>
<keyword id="KW-0493">Microtubule</keyword>
<keyword id="KW-0505">Motor protein</keyword>
<keyword id="KW-1267">Proteomics identification</keyword>
<keyword id="KW-1185">Reference proteome</keyword>
<keyword id="KW-0813">Transport</keyword>
<dbReference type="EMBL" id="AF112997">
    <property type="protein sequence ID" value="AAP97230.1"/>
    <property type="molecule type" value="mRNA"/>
</dbReference>
<dbReference type="EMBL" id="AK312125">
    <property type="protein sequence ID" value="BAG35061.1"/>
    <property type="molecule type" value="mRNA"/>
</dbReference>
<dbReference type="EMBL" id="CH471109">
    <property type="protein sequence ID" value="EAW94484.1"/>
    <property type="molecule type" value="Genomic_DNA"/>
</dbReference>
<dbReference type="EMBL" id="BC010744">
    <property type="protein sequence ID" value="AAH10744.1"/>
    <property type="molecule type" value="mRNA"/>
</dbReference>
<dbReference type="CCDS" id="CCDS11601.1"/>
<dbReference type="RefSeq" id="NP_542408.1">
    <property type="nucleotide sequence ID" value="NM_080677.3"/>
</dbReference>
<dbReference type="PDB" id="2XQQ">
    <property type="method" value="X-ray"/>
    <property type="resolution" value="1.31 A"/>
    <property type="chains" value="A/B/C/D=1-89"/>
</dbReference>
<dbReference type="PDB" id="3P8M">
    <property type="method" value="X-ray"/>
    <property type="resolution" value="2.90 A"/>
    <property type="chains" value="A/B=1-89"/>
</dbReference>
<dbReference type="PDB" id="4D07">
    <property type="method" value="X-ray"/>
    <property type="resolution" value="1.85 A"/>
    <property type="chains" value="A=1-89"/>
</dbReference>
<dbReference type="PDB" id="7CNU">
    <property type="method" value="X-ray"/>
    <property type="resolution" value="2.00 A"/>
    <property type="chains" value="A/B/E=2-89"/>
</dbReference>
<dbReference type="PDBsum" id="2XQQ"/>
<dbReference type="PDBsum" id="3P8M"/>
<dbReference type="PDBsum" id="4D07"/>
<dbReference type="PDBsum" id="7CNU"/>
<dbReference type="SMR" id="Q96FJ2"/>
<dbReference type="BioGRID" id="126680">
    <property type="interactions" value="275"/>
</dbReference>
<dbReference type="ComplexPortal" id="CPX-8163">
    <property type="entry name" value="Radial spoke complex, ciliiar variant"/>
</dbReference>
<dbReference type="ComplexPortal" id="CPX-8164">
    <property type="entry name" value="Radial spoke complex, flagellar variant"/>
</dbReference>
<dbReference type="CORUM" id="Q96FJ2"/>
<dbReference type="FunCoup" id="Q96FJ2">
    <property type="interactions" value="1638"/>
</dbReference>
<dbReference type="IntAct" id="Q96FJ2">
    <property type="interactions" value="243"/>
</dbReference>
<dbReference type="MINT" id="Q96FJ2"/>
<dbReference type="STRING" id="9606.ENSP00000477310"/>
<dbReference type="BindingDB" id="Q96FJ2"/>
<dbReference type="GlyGen" id="Q96FJ2">
    <property type="glycosylation" value="1 site, 1 O-linked glycan (1 site)"/>
</dbReference>
<dbReference type="iPTMnet" id="Q96FJ2"/>
<dbReference type="PhosphoSitePlus" id="Q96FJ2"/>
<dbReference type="SwissPalm" id="Q96FJ2"/>
<dbReference type="BioMuta" id="DYNLL2"/>
<dbReference type="DMDM" id="56748850"/>
<dbReference type="jPOST" id="Q96FJ2"/>
<dbReference type="MassIVE" id="Q96FJ2"/>
<dbReference type="PaxDb" id="9606-ENSP00000477310"/>
<dbReference type="PeptideAtlas" id="Q96FJ2"/>
<dbReference type="ProteomicsDB" id="76535"/>
<dbReference type="Pumba" id="Q96FJ2"/>
<dbReference type="TopDownProteomics" id="Q96FJ2"/>
<dbReference type="Antibodypedia" id="71353">
    <property type="antibodies" value="146 antibodies from 27 providers"/>
</dbReference>
<dbReference type="DNASU" id="140735"/>
<dbReference type="Ensembl" id="ENST00000579991.3">
    <property type="protein sequence ID" value="ENSP00000477310.1"/>
    <property type="gene ID" value="ENSG00000264364.3"/>
</dbReference>
<dbReference type="GeneID" id="140735"/>
<dbReference type="KEGG" id="hsa:140735"/>
<dbReference type="MANE-Select" id="ENST00000579991.3">
    <property type="protein sequence ID" value="ENSP00000477310.1"/>
    <property type="RefSeq nucleotide sequence ID" value="NM_080677.3"/>
    <property type="RefSeq protein sequence ID" value="NP_542408.1"/>
</dbReference>
<dbReference type="UCSC" id="uc010wnn.2">
    <property type="organism name" value="human"/>
</dbReference>
<dbReference type="AGR" id="HGNC:24596"/>
<dbReference type="CTD" id="140735"/>
<dbReference type="DisGeNET" id="140735"/>
<dbReference type="GeneCards" id="DYNLL2"/>
<dbReference type="HGNC" id="HGNC:24596">
    <property type="gene designation" value="DYNLL2"/>
</dbReference>
<dbReference type="HPA" id="ENSG00000264364">
    <property type="expression patterns" value="Low tissue specificity"/>
</dbReference>
<dbReference type="MIM" id="608942">
    <property type="type" value="gene"/>
</dbReference>
<dbReference type="neXtProt" id="NX_Q96FJ2"/>
<dbReference type="OpenTargets" id="ENSG00000264364"/>
<dbReference type="PharmGKB" id="PA142671920"/>
<dbReference type="VEuPathDB" id="HostDB:ENSG00000264364"/>
<dbReference type="eggNOG" id="KOG3430">
    <property type="taxonomic scope" value="Eukaryota"/>
</dbReference>
<dbReference type="GeneTree" id="ENSGT00390000000378"/>
<dbReference type="HOGENOM" id="CLU_070944_4_0_1"/>
<dbReference type="InParanoid" id="Q96FJ2"/>
<dbReference type="OMA" id="THEKGHF"/>
<dbReference type="OrthoDB" id="10033309at2759"/>
<dbReference type="PAN-GO" id="Q96FJ2">
    <property type="GO annotations" value="2 GO annotations based on evolutionary models"/>
</dbReference>
<dbReference type="PhylomeDB" id="Q96FJ2"/>
<dbReference type="TreeFam" id="TF300264"/>
<dbReference type="PathwayCommons" id="Q96FJ2"/>
<dbReference type="Reactome" id="R-HSA-139910">
    <property type="pathway name" value="Activation of BMF and translocation to mitochondria"/>
</dbReference>
<dbReference type="Reactome" id="R-HSA-141444">
    <property type="pathway name" value="Amplification of signal from unattached kinetochores via a MAD2 inhibitory signal"/>
</dbReference>
<dbReference type="Reactome" id="R-HSA-1632852">
    <property type="pathway name" value="Macroautophagy"/>
</dbReference>
<dbReference type="Reactome" id="R-HSA-2132295">
    <property type="pathway name" value="MHC class II antigen presentation"/>
</dbReference>
<dbReference type="Reactome" id="R-HSA-2467813">
    <property type="pathway name" value="Separation of Sister Chromatids"/>
</dbReference>
<dbReference type="Reactome" id="R-HSA-2500257">
    <property type="pathway name" value="Resolution of Sister Chromatid Cohesion"/>
</dbReference>
<dbReference type="Reactome" id="R-HSA-3371497">
    <property type="pathway name" value="HSP90 chaperone cycle for steroid hormone receptors (SHR) in the presence of ligand"/>
</dbReference>
<dbReference type="Reactome" id="R-HSA-5620924">
    <property type="pathway name" value="Intraflagellar transport"/>
</dbReference>
<dbReference type="Reactome" id="R-HSA-5663220">
    <property type="pathway name" value="RHO GTPases Activate Formins"/>
</dbReference>
<dbReference type="Reactome" id="R-HSA-6807878">
    <property type="pathway name" value="COPI-mediated anterograde transport"/>
</dbReference>
<dbReference type="Reactome" id="R-HSA-6811436">
    <property type="pathway name" value="COPI-independent Golgi-to-ER retrograde traffic"/>
</dbReference>
<dbReference type="Reactome" id="R-HSA-68877">
    <property type="pathway name" value="Mitotic Prometaphase"/>
</dbReference>
<dbReference type="Reactome" id="R-HSA-9609690">
    <property type="pathway name" value="HCMV Early Events"/>
</dbReference>
<dbReference type="Reactome" id="R-HSA-9646399">
    <property type="pathway name" value="Aggrephagy"/>
</dbReference>
<dbReference type="Reactome" id="R-HSA-9648025">
    <property type="pathway name" value="EML4 and NUDC in mitotic spindle formation"/>
</dbReference>
<dbReference type="SignaLink" id="Q96FJ2"/>
<dbReference type="SIGNOR" id="Q96FJ2"/>
<dbReference type="BioGRID-ORCS" id="140735">
    <property type="hits" value="22 hits in 1146 CRISPR screens"/>
</dbReference>
<dbReference type="CD-CODE" id="8C2F96ED">
    <property type="entry name" value="Centrosome"/>
</dbReference>
<dbReference type="CD-CODE" id="DEE660B4">
    <property type="entry name" value="Stress granule"/>
</dbReference>
<dbReference type="ChiTaRS" id="DYNLL2">
    <property type="organism name" value="human"/>
</dbReference>
<dbReference type="EvolutionaryTrace" id="Q96FJ2"/>
<dbReference type="GeneWiki" id="DYNLL2"/>
<dbReference type="GenomeRNAi" id="140735"/>
<dbReference type="Pharos" id="Q96FJ2">
    <property type="development level" value="Tbio"/>
</dbReference>
<dbReference type="PRO" id="PR:Q96FJ2"/>
<dbReference type="Proteomes" id="UP000005640">
    <property type="component" value="Chromosome 17"/>
</dbReference>
<dbReference type="RNAct" id="Q96FJ2">
    <property type="molecule type" value="protein"/>
</dbReference>
<dbReference type="Bgee" id="ENSG00000264364">
    <property type="expression patterns" value="Expressed in medial globus pallidus and 199 other cell types or tissues"/>
</dbReference>
<dbReference type="GO" id="GO:0097731">
    <property type="term" value="C:9+0 non-motile cilium"/>
    <property type="evidence" value="ECO:0000314"/>
    <property type="project" value="GO_Central"/>
</dbReference>
<dbReference type="GO" id="GO:0005813">
    <property type="term" value="C:centrosome"/>
    <property type="evidence" value="ECO:0000314"/>
    <property type="project" value="UniProtKB"/>
</dbReference>
<dbReference type="GO" id="GO:0097542">
    <property type="term" value="C:ciliary tip"/>
    <property type="evidence" value="ECO:0000304"/>
    <property type="project" value="Reactome"/>
</dbReference>
<dbReference type="GO" id="GO:0005929">
    <property type="term" value="C:cilium"/>
    <property type="evidence" value="ECO:0000304"/>
    <property type="project" value="Reactome"/>
</dbReference>
<dbReference type="GO" id="GO:0005868">
    <property type="term" value="C:cytoplasmic dynein complex"/>
    <property type="evidence" value="ECO:0000318"/>
    <property type="project" value="GO_Central"/>
</dbReference>
<dbReference type="GO" id="GO:0005856">
    <property type="term" value="C:cytoskeleton"/>
    <property type="evidence" value="ECO:0000314"/>
    <property type="project" value="UniProtKB"/>
</dbReference>
<dbReference type="GO" id="GO:0005829">
    <property type="term" value="C:cytosol"/>
    <property type="evidence" value="ECO:0000304"/>
    <property type="project" value="Reactome"/>
</dbReference>
<dbReference type="GO" id="GO:0098978">
    <property type="term" value="C:glutamatergic synapse"/>
    <property type="evidence" value="ECO:0000314"/>
    <property type="project" value="SynGO"/>
</dbReference>
<dbReference type="GO" id="GO:0016020">
    <property type="term" value="C:membrane"/>
    <property type="evidence" value="ECO:0007005"/>
    <property type="project" value="UniProtKB"/>
</dbReference>
<dbReference type="GO" id="GO:0005874">
    <property type="term" value="C:microtubule"/>
    <property type="evidence" value="ECO:0007669"/>
    <property type="project" value="UniProtKB-KW"/>
</dbReference>
<dbReference type="GO" id="GO:0031475">
    <property type="term" value="C:myosin V complex"/>
    <property type="evidence" value="ECO:0000250"/>
    <property type="project" value="UniProtKB"/>
</dbReference>
<dbReference type="GO" id="GO:0005634">
    <property type="term" value="C:nucleus"/>
    <property type="evidence" value="ECO:0007005"/>
    <property type="project" value="UniProtKB"/>
</dbReference>
<dbReference type="GO" id="GO:0005886">
    <property type="term" value="C:plasma membrane"/>
    <property type="evidence" value="ECO:0000304"/>
    <property type="project" value="Reactome"/>
</dbReference>
<dbReference type="GO" id="GO:0098794">
    <property type="term" value="C:postsynapse"/>
    <property type="evidence" value="ECO:0000314"/>
    <property type="project" value="SynGO"/>
</dbReference>
<dbReference type="GO" id="GO:0014069">
    <property type="term" value="C:postsynaptic density"/>
    <property type="evidence" value="ECO:0007669"/>
    <property type="project" value="Ensembl"/>
</dbReference>
<dbReference type="GO" id="GO:0045505">
    <property type="term" value="F:dynein intermediate chain binding"/>
    <property type="evidence" value="ECO:0000318"/>
    <property type="project" value="GO_Central"/>
</dbReference>
<dbReference type="GO" id="GO:0042802">
    <property type="term" value="F:identical protein binding"/>
    <property type="evidence" value="ECO:0007669"/>
    <property type="project" value="Ensembl"/>
</dbReference>
<dbReference type="GO" id="GO:0044877">
    <property type="term" value="F:protein-containing complex binding"/>
    <property type="evidence" value="ECO:0007669"/>
    <property type="project" value="Ensembl"/>
</dbReference>
<dbReference type="GO" id="GO:0097110">
    <property type="term" value="F:scaffold protein binding"/>
    <property type="evidence" value="ECO:0007669"/>
    <property type="project" value="Ensembl"/>
</dbReference>
<dbReference type="GO" id="GO:0007017">
    <property type="term" value="P:microtubule-based process"/>
    <property type="evidence" value="ECO:0007669"/>
    <property type="project" value="InterPro"/>
</dbReference>
<dbReference type="CDD" id="cd21452">
    <property type="entry name" value="DLC-like_DYNLL1_DYNLL2"/>
    <property type="match status" value="1"/>
</dbReference>
<dbReference type="FunFam" id="3.30.740.10:FF:000001">
    <property type="entry name" value="Dynein light chain"/>
    <property type="match status" value="1"/>
</dbReference>
<dbReference type="Gene3D" id="3.30.740.10">
    <property type="entry name" value="Protein Inhibitor Of Neuronal Nitric Oxide Synthase"/>
    <property type="match status" value="1"/>
</dbReference>
<dbReference type="InterPro" id="IPR037177">
    <property type="entry name" value="DLC_sf"/>
</dbReference>
<dbReference type="InterPro" id="IPR019763">
    <property type="entry name" value="Dynein_light_1/2_CS"/>
</dbReference>
<dbReference type="InterPro" id="IPR001372">
    <property type="entry name" value="Dynein_light_chain_typ-1/2"/>
</dbReference>
<dbReference type="PANTHER" id="PTHR11886">
    <property type="entry name" value="DYNEIN LIGHT CHAIN"/>
    <property type="match status" value="1"/>
</dbReference>
<dbReference type="PANTHER" id="PTHR11886:SF113">
    <property type="entry name" value="DYNEIN LIGHT CHAIN 2, CYTOPLASMIC"/>
    <property type="match status" value="1"/>
</dbReference>
<dbReference type="Pfam" id="PF01221">
    <property type="entry name" value="Dynein_light"/>
    <property type="match status" value="1"/>
</dbReference>
<dbReference type="SMART" id="SM01375">
    <property type="entry name" value="Dynein_light"/>
    <property type="match status" value="1"/>
</dbReference>
<dbReference type="SUPFAM" id="SSF54648">
    <property type="entry name" value="DLC"/>
    <property type="match status" value="1"/>
</dbReference>
<dbReference type="PROSITE" id="PS01239">
    <property type="entry name" value="DYNEIN_LIGHT_1"/>
    <property type="match status" value="1"/>
</dbReference>
<feature type="chain" id="PRO_0000195132" description="Dynein light chain 2, cytoplasmic">
    <location>
        <begin position="1"/>
        <end position="89"/>
    </location>
</feature>
<feature type="site" description="Interaction with myosin V motor complex" evidence="1">
    <location>
        <position position="41"/>
    </location>
</feature>
<feature type="turn" evidence="8">
    <location>
        <begin position="1"/>
        <end position="3"/>
    </location>
</feature>
<feature type="strand" evidence="7">
    <location>
        <begin position="6"/>
        <end position="13"/>
    </location>
</feature>
<feature type="helix" evidence="7">
    <location>
        <begin position="15"/>
        <end position="31"/>
    </location>
</feature>
<feature type="helix" evidence="7">
    <location>
        <begin position="35"/>
        <end position="50"/>
    </location>
</feature>
<feature type="strand" evidence="7">
    <location>
        <begin position="54"/>
        <end position="66"/>
    </location>
</feature>
<feature type="strand" evidence="7">
    <location>
        <begin position="72"/>
        <end position="78"/>
    </location>
</feature>
<feature type="strand" evidence="7">
    <location>
        <begin position="81"/>
        <end position="87"/>
    </location>
</feature>
<comment type="function">
    <text evidence="1">Acts as one of several non-catalytic accessory components of the cytoplasmic dynein 1 complex that are thought to be involved in linking dynein to cargos and to adapter proteins that regulate dynein function. Cytoplasmic dynein 1 acts as a motor for the intracellular retrograde motility of vesicles and organelles along microtubules. May play a role in changing or maintaining the spatial distribution of cytoskeletal structures (By similarity).</text>
</comment>
<comment type="subunit">
    <text evidence="2 3 4 5">Homodimer (By similarity). The cytoplasmic dynein 1 complex consists of two catalytic heavy chains (HCs) and a number of non-catalytic subunits which present intermediate chains (ICs), light intermediate chains (LICs) and light chains (LCs); the composition seems to vary in respect to the IC, LIC and LC composition (By similarity). The heavy chain homodimer serves as a scaffold for the probable homodimeric assembly of the respective non-catalytic subunits (By similarity). Dynein ICs and LICs bind directly to the HC dimer and the LCs assemble on the IC dimer (By similarity). Interacts with DYNC1I1 (By similarity). Interacts with BMF (By similarity). Component of the myosin V motor complex (By similarity). Interacts with BCAS1 (By similarity). Interacts with Basson/BSN (PubMed:19380881). Interacts with AMBRA1 (via TQT motifs); tethering AMBRA1 to the cytoskeleton (PubMed:20921139). Interacts with IQUB (By similarity).</text>
</comment>
<comment type="interaction">
    <interactant intactId="EBI-742371">
        <id>Q96FJ2</id>
    </interactant>
    <interactant intactId="EBI-3919268">
        <id>Q96LC9</id>
        <label>BMF</label>
    </interactant>
    <organismsDiffer>false</organismsDiffer>
    <experiments>3</experiments>
</comment>
<comment type="interaction">
    <interactant intactId="EBI-742371">
        <id>Q96FJ2</id>
    </interactant>
    <interactant intactId="EBI-725606">
        <id>Q9NWQ9</id>
        <label>C14orf119</label>
    </interactant>
    <organismsDiffer>false</organismsDiffer>
    <experiments>3</experiments>
</comment>
<comment type="interaction">
    <interactant intactId="EBI-742371">
        <id>Q96FJ2</id>
    </interactant>
    <interactant intactId="EBI-742362">
        <id>O96015</id>
        <label>DNAL4</label>
    </interactant>
    <organismsDiffer>false</organismsDiffer>
    <experiments>8</experiments>
</comment>
<comment type="interaction">
    <interactant intactId="EBI-742371">
        <id>Q96FJ2</id>
    </interactant>
    <interactant intactId="EBI-12082590">
        <id>Q6W0C5</id>
        <label>DPPA3</label>
    </interactant>
    <organismsDiffer>false</organismsDiffer>
    <experiments>3</experiments>
</comment>
<comment type="interaction">
    <interactant intactId="EBI-742371">
        <id>Q96FJ2</id>
    </interactant>
    <interactant intactId="EBI-366267">
        <id>O14576</id>
        <label>DYNC1I1</label>
    </interactant>
    <organismsDiffer>false</organismsDiffer>
    <experiments>3</experiments>
</comment>
<comment type="interaction">
    <interactant intactId="EBI-742371">
        <id>Q96FJ2</id>
    </interactant>
    <interactant intactId="EBI-3893327">
        <id>Q6P1L5</id>
        <label>FAM117B</label>
    </interactant>
    <organismsDiffer>false</organismsDiffer>
    <experiments>9</experiments>
</comment>
<comment type="interaction">
    <interactant intactId="EBI-742371">
        <id>Q96FJ2</id>
    </interactant>
    <interactant intactId="EBI-720116">
        <id>P60520</id>
        <label>GABARAPL2</label>
    </interactant>
    <organismsDiffer>false</organismsDiffer>
    <experiments>3</experiments>
</comment>
<comment type="interaction">
    <interactant intactId="EBI-742371">
        <id>Q96FJ2</id>
    </interactant>
    <interactant intactId="EBI-2549423">
        <id>Q6NT76</id>
        <label>HMBOX1</label>
    </interactant>
    <organismsDiffer>false</organismsDiffer>
    <experiments>5</experiments>
</comment>
<comment type="interaction">
    <interactant intactId="EBI-742371">
        <id>Q96FJ2</id>
    </interactant>
    <interactant intactId="EBI-748420">
        <id>Q9NSC5</id>
        <label>HOMER3</label>
    </interactant>
    <organismsDiffer>false</organismsDiffer>
    <experiments>5</experiments>
</comment>
<comment type="interaction">
    <interactant intactId="EBI-742371">
        <id>Q96FJ2</id>
    </interactant>
    <interactant intactId="EBI-8638439">
        <id>Q8IYA8</id>
        <label>IHO1</label>
    </interactant>
    <organismsDiffer>false</organismsDiffer>
    <experiments>3</experiments>
</comment>
<comment type="interaction">
    <interactant intactId="EBI-742371">
        <id>Q96FJ2</id>
    </interactant>
    <interactant intactId="EBI-2556193">
        <id>Q63ZY3</id>
        <label>KANK2</label>
    </interactant>
    <organismsDiffer>false</organismsDiffer>
    <experiments>5</experiments>
</comment>
<comment type="interaction">
    <interactant intactId="EBI-742371">
        <id>Q96FJ2</id>
    </interactant>
    <interactant intactId="EBI-748397">
        <id>P50222</id>
        <label>MEOX2</label>
    </interactant>
    <organismsDiffer>false</organismsDiffer>
    <experiments>3</experiments>
</comment>
<comment type="interaction">
    <interactant intactId="EBI-742371">
        <id>Q96FJ2</id>
    </interactant>
    <interactant intactId="EBI-9675802">
        <id>Q6PF18</id>
        <label>MORN3</label>
    </interactant>
    <organismsDiffer>false</organismsDiffer>
    <experiments>4</experiments>
</comment>
<comment type="interaction">
    <interactant intactId="EBI-742371">
        <id>Q96FJ2</id>
    </interactant>
    <interactant intactId="EBI-11960139">
        <id>Q7L8S5</id>
        <label>OTUD6A</label>
    </interactant>
    <organismsDiffer>false</organismsDiffer>
    <experiments>3</experiments>
</comment>
<comment type="interaction">
    <interactant intactId="EBI-742371">
        <id>Q96FJ2</id>
    </interactant>
    <interactant intactId="EBI-2682139">
        <id>P61925</id>
        <label>PKIA</label>
    </interactant>
    <organismsDiffer>false</organismsDiffer>
    <experiments>3</experiments>
</comment>
<comment type="interaction">
    <interactant intactId="EBI-742371">
        <id>Q96FJ2</id>
    </interactant>
    <interactant intactId="EBI-1052231">
        <id>Q9Y2B9</id>
        <label>PKIG</label>
    </interactant>
    <organismsDiffer>false</organismsDiffer>
    <experiments>3</experiments>
</comment>
<comment type="interaction">
    <interactant intactId="EBI-742371">
        <id>Q96FJ2</id>
    </interactant>
    <interactant intactId="EBI-1047876">
        <id>Q8IV61</id>
        <label>RASGRP3</label>
    </interactant>
    <organismsDiffer>false</organismsDiffer>
    <experiments>3</experiments>
</comment>
<comment type="interaction">
    <interactant intactId="EBI-742371">
        <id>Q96FJ2</id>
    </interactant>
    <interactant intactId="EBI-10286004">
        <id>Q86WS4</id>
        <label>REDIC1</label>
    </interactant>
    <organismsDiffer>false</organismsDiffer>
    <experiments>4</experiments>
</comment>
<comment type="interaction">
    <interactant intactId="EBI-742371">
        <id>Q96FJ2</id>
    </interactant>
    <interactant intactId="EBI-2805647">
        <id>Q93073</id>
        <label>SECISBP2L</label>
    </interactant>
    <organismsDiffer>false</organismsDiffer>
    <experiments>4</experiments>
</comment>
<comment type="interaction">
    <interactant intactId="EBI-742371">
        <id>Q96FJ2</id>
    </interactant>
    <interactant intactId="EBI-1047513">
        <id>O43236</id>
        <label>SEPTIN4</label>
    </interactant>
    <organismsDiffer>false</organismsDiffer>
    <experiments>3</experiments>
</comment>
<comment type="interaction">
    <interactant intactId="EBI-742371">
        <id>Q96FJ2</id>
    </interactant>
    <interactant intactId="EBI-750494">
        <id>P49901</id>
        <label>SMCP</label>
    </interactant>
    <organismsDiffer>false</organismsDiffer>
    <experiments>3</experiments>
</comment>
<comment type="interaction">
    <interactant intactId="EBI-742371">
        <id>Q96FJ2</id>
    </interactant>
    <interactant intactId="EBI-11959123">
        <id>Q99932-2</id>
        <label>SPAG8</label>
    </interactant>
    <organismsDiffer>false</organismsDiffer>
    <experiments>3</experiments>
</comment>
<comment type="interaction">
    <interactant intactId="EBI-742371">
        <id>Q96FJ2</id>
    </interactant>
    <interactant intactId="EBI-740492">
        <id>Q9UKI8</id>
        <label>TLK1</label>
    </interactant>
    <organismsDiffer>false</organismsDiffer>
    <experiments>6</experiments>
</comment>
<comment type="interaction">
    <interactant intactId="EBI-742371">
        <id>Q96FJ2</id>
    </interactant>
    <interactant intactId="EBI-517127">
        <id>P98170</id>
        <label>XIAP</label>
    </interactant>
    <organismsDiffer>false</organismsDiffer>
    <experiments>5</experiments>
</comment>
<comment type="interaction">
    <interactant intactId="EBI-742371">
        <id>Q96FJ2</id>
    </interactant>
    <interactant intactId="EBI-18679381">
        <id>Q86SH2</id>
        <label>ZAR1</label>
    </interactant>
    <organismsDiffer>false</organismsDiffer>
    <experiments>3</experiments>
</comment>
<comment type="interaction">
    <interactant intactId="EBI-742371">
        <id>Q96FJ2</id>
    </interactant>
    <interactant intactId="EBI-9675596">
        <id>P0C206</id>
    </interactant>
    <organismsDiffer>true</organismsDiffer>
    <experiments>4</experiments>
</comment>
<comment type="interaction">
    <interactant intactId="EBI-742371">
        <id>Q96FJ2</id>
    </interactant>
    <interactant intactId="EBI-9676175">
        <id>Q85601</id>
    </interactant>
    <organismsDiffer>true</organismsDiffer>
    <experiments>3</experiments>
</comment>
<comment type="subcellular location">
    <subcellularLocation>
        <location evidence="5">Cytoplasm</location>
        <location evidence="5">Cytoskeleton</location>
    </subcellularLocation>
</comment>
<comment type="similarity">
    <text evidence="6">Belongs to the dynein light chain family.</text>
</comment>
<reference key="1">
    <citation type="submission" date="2001-07" db="EMBL/GenBank/DDBJ databases">
        <title>Cloning and sequencing of a novel human cDNA homologous to Rattus norvegicus protein inhibitor of neuronal nitric oxide synthase (PIN) mRNA.</title>
        <authorList>
            <person name="Zhang H.L."/>
            <person name="Yu L."/>
            <person name="Yang J."/>
            <person name="Fu Q."/>
            <person name="Cui Y.Y."/>
            <person name="Zhao S.Y."/>
        </authorList>
    </citation>
    <scope>NUCLEOTIDE SEQUENCE [MRNA]</scope>
</reference>
<reference key="2">
    <citation type="journal article" date="2004" name="Nat. Genet.">
        <title>Complete sequencing and characterization of 21,243 full-length human cDNAs.</title>
        <authorList>
            <person name="Ota T."/>
            <person name="Suzuki Y."/>
            <person name="Nishikawa T."/>
            <person name="Otsuki T."/>
            <person name="Sugiyama T."/>
            <person name="Irie R."/>
            <person name="Wakamatsu A."/>
            <person name="Hayashi K."/>
            <person name="Sato H."/>
            <person name="Nagai K."/>
            <person name="Kimura K."/>
            <person name="Makita H."/>
            <person name="Sekine M."/>
            <person name="Obayashi M."/>
            <person name="Nishi T."/>
            <person name="Shibahara T."/>
            <person name="Tanaka T."/>
            <person name="Ishii S."/>
            <person name="Yamamoto J."/>
            <person name="Saito K."/>
            <person name="Kawai Y."/>
            <person name="Isono Y."/>
            <person name="Nakamura Y."/>
            <person name="Nagahari K."/>
            <person name="Murakami K."/>
            <person name="Yasuda T."/>
            <person name="Iwayanagi T."/>
            <person name="Wagatsuma M."/>
            <person name="Shiratori A."/>
            <person name="Sudo H."/>
            <person name="Hosoiri T."/>
            <person name="Kaku Y."/>
            <person name="Kodaira H."/>
            <person name="Kondo H."/>
            <person name="Sugawara M."/>
            <person name="Takahashi M."/>
            <person name="Kanda K."/>
            <person name="Yokoi T."/>
            <person name="Furuya T."/>
            <person name="Kikkawa E."/>
            <person name="Omura Y."/>
            <person name="Abe K."/>
            <person name="Kamihara K."/>
            <person name="Katsuta N."/>
            <person name="Sato K."/>
            <person name="Tanikawa M."/>
            <person name="Yamazaki M."/>
            <person name="Ninomiya K."/>
            <person name="Ishibashi T."/>
            <person name="Yamashita H."/>
            <person name="Murakawa K."/>
            <person name="Fujimori K."/>
            <person name="Tanai H."/>
            <person name="Kimata M."/>
            <person name="Watanabe M."/>
            <person name="Hiraoka S."/>
            <person name="Chiba Y."/>
            <person name="Ishida S."/>
            <person name="Ono Y."/>
            <person name="Takiguchi S."/>
            <person name="Watanabe S."/>
            <person name="Yosida M."/>
            <person name="Hotuta T."/>
            <person name="Kusano J."/>
            <person name="Kanehori K."/>
            <person name="Takahashi-Fujii A."/>
            <person name="Hara H."/>
            <person name="Tanase T.-O."/>
            <person name="Nomura Y."/>
            <person name="Togiya S."/>
            <person name="Komai F."/>
            <person name="Hara R."/>
            <person name="Takeuchi K."/>
            <person name="Arita M."/>
            <person name="Imose N."/>
            <person name="Musashino K."/>
            <person name="Yuuki H."/>
            <person name="Oshima A."/>
            <person name="Sasaki N."/>
            <person name="Aotsuka S."/>
            <person name="Yoshikawa Y."/>
            <person name="Matsunawa H."/>
            <person name="Ichihara T."/>
            <person name="Shiohata N."/>
            <person name="Sano S."/>
            <person name="Moriya S."/>
            <person name="Momiyama H."/>
            <person name="Satoh N."/>
            <person name="Takami S."/>
            <person name="Terashima Y."/>
            <person name="Suzuki O."/>
            <person name="Nakagawa S."/>
            <person name="Senoh A."/>
            <person name="Mizoguchi H."/>
            <person name="Goto Y."/>
            <person name="Shimizu F."/>
            <person name="Wakebe H."/>
            <person name="Hishigaki H."/>
            <person name="Watanabe T."/>
            <person name="Sugiyama A."/>
            <person name="Takemoto M."/>
            <person name="Kawakami B."/>
            <person name="Yamazaki M."/>
            <person name="Watanabe K."/>
            <person name="Kumagai A."/>
            <person name="Itakura S."/>
            <person name="Fukuzumi Y."/>
            <person name="Fujimori Y."/>
            <person name="Komiyama M."/>
            <person name="Tashiro H."/>
            <person name="Tanigami A."/>
            <person name="Fujiwara T."/>
            <person name="Ono T."/>
            <person name="Yamada K."/>
            <person name="Fujii Y."/>
            <person name="Ozaki K."/>
            <person name="Hirao M."/>
            <person name="Ohmori Y."/>
            <person name="Kawabata A."/>
            <person name="Hikiji T."/>
            <person name="Kobatake N."/>
            <person name="Inagaki H."/>
            <person name="Ikema Y."/>
            <person name="Okamoto S."/>
            <person name="Okitani R."/>
            <person name="Kawakami T."/>
            <person name="Noguchi S."/>
            <person name="Itoh T."/>
            <person name="Shigeta K."/>
            <person name="Senba T."/>
            <person name="Matsumura K."/>
            <person name="Nakajima Y."/>
            <person name="Mizuno T."/>
            <person name="Morinaga M."/>
            <person name="Sasaki M."/>
            <person name="Togashi T."/>
            <person name="Oyama M."/>
            <person name="Hata H."/>
            <person name="Watanabe M."/>
            <person name="Komatsu T."/>
            <person name="Mizushima-Sugano J."/>
            <person name="Satoh T."/>
            <person name="Shirai Y."/>
            <person name="Takahashi Y."/>
            <person name="Nakagawa K."/>
            <person name="Okumura K."/>
            <person name="Nagase T."/>
            <person name="Nomura N."/>
            <person name="Kikuchi H."/>
            <person name="Masuho Y."/>
            <person name="Yamashita R."/>
            <person name="Nakai K."/>
            <person name="Yada T."/>
            <person name="Nakamura Y."/>
            <person name="Ohara O."/>
            <person name="Isogai T."/>
            <person name="Sugano S."/>
        </authorList>
    </citation>
    <scope>NUCLEOTIDE SEQUENCE [LARGE SCALE MRNA]</scope>
</reference>
<reference key="3">
    <citation type="submission" date="2005-09" db="EMBL/GenBank/DDBJ databases">
        <authorList>
            <person name="Mural R.J."/>
            <person name="Istrail S."/>
            <person name="Sutton G.G."/>
            <person name="Florea L."/>
            <person name="Halpern A.L."/>
            <person name="Mobarry C.M."/>
            <person name="Lippert R."/>
            <person name="Walenz B."/>
            <person name="Shatkay H."/>
            <person name="Dew I."/>
            <person name="Miller J.R."/>
            <person name="Flanigan M.J."/>
            <person name="Edwards N.J."/>
            <person name="Bolanos R."/>
            <person name="Fasulo D."/>
            <person name="Halldorsson B.V."/>
            <person name="Hannenhalli S."/>
            <person name="Turner R."/>
            <person name="Yooseph S."/>
            <person name="Lu F."/>
            <person name="Nusskern D.R."/>
            <person name="Shue B.C."/>
            <person name="Zheng X.H."/>
            <person name="Zhong F."/>
            <person name="Delcher A.L."/>
            <person name="Huson D.H."/>
            <person name="Kravitz S.A."/>
            <person name="Mouchard L."/>
            <person name="Reinert K."/>
            <person name="Remington K.A."/>
            <person name="Clark A.G."/>
            <person name="Waterman M.S."/>
            <person name="Eichler E.E."/>
            <person name="Adams M.D."/>
            <person name="Hunkapiller M.W."/>
            <person name="Myers E.W."/>
            <person name="Venter J.C."/>
        </authorList>
    </citation>
    <scope>NUCLEOTIDE SEQUENCE [LARGE SCALE GENOMIC DNA]</scope>
</reference>
<reference key="4">
    <citation type="journal article" date="2004" name="Genome Res.">
        <title>The status, quality, and expansion of the NIH full-length cDNA project: the Mammalian Gene Collection (MGC).</title>
        <authorList>
            <consortium name="The MGC Project Team"/>
        </authorList>
    </citation>
    <scope>NUCLEOTIDE SEQUENCE [LARGE SCALE MRNA]</scope>
    <source>
        <tissue>Lung</tissue>
    </source>
</reference>
<reference key="5">
    <citation type="journal article" date="2009" name="J. Cell Biol.">
        <title>Dynein light chain regulates axonal trafficking and synaptic levels of Bassoon.</title>
        <authorList>
            <person name="Fejtova A."/>
            <person name="Davydova D."/>
            <person name="Bischof F."/>
            <person name="Lazarevic V."/>
            <person name="Altrock W.D."/>
            <person name="Romorini S."/>
            <person name="Schoene C."/>
            <person name="Zuschratter W."/>
            <person name="Kreutz M.R."/>
            <person name="Garner C.C."/>
            <person name="Ziv N.E."/>
            <person name="Gundelfinger E.D."/>
        </authorList>
    </citation>
    <scope>INTERACTION WITH BSN</scope>
</reference>
<reference key="6">
    <citation type="journal article" date="2010" name="J. Cell Biol.">
        <title>The dynamic interaction of AMBRA1 with the dynein motor complex regulates mammalian autophagy.</title>
        <authorList>
            <person name="Di Bartolomeo S."/>
            <person name="Corazzari M."/>
            <person name="Nazio F."/>
            <person name="Oliverio S."/>
            <person name="Lisi G."/>
            <person name="Antonioli M."/>
            <person name="Pagliarini V."/>
            <person name="Matteoni S."/>
            <person name="Fuoco C."/>
            <person name="Giunta L."/>
            <person name="D'Amelio M."/>
            <person name="Nardacci R."/>
            <person name="Romagnoli A."/>
            <person name="Piacentini M."/>
            <person name="Cecconi F."/>
            <person name="Fimia G.M."/>
        </authorList>
    </citation>
    <scope>SUBCELLULAR LOCATION</scope>
    <scope>INTERACTION WITH AMBRA1</scope>
</reference>
<reference key="7">
    <citation type="journal article" date="2011" name="BMC Syst. Biol.">
        <title>Initial characterization of the human central proteome.</title>
        <authorList>
            <person name="Burkard T.R."/>
            <person name="Planyavsky M."/>
            <person name="Kaupe I."/>
            <person name="Breitwieser F.P."/>
            <person name="Buerckstuemmer T."/>
            <person name="Bennett K.L."/>
            <person name="Superti-Furga G."/>
            <person name="Colinge J."/>
        </authorList>
    </citation>
    <scope>IDENTIFICATION BY MASS SPECTROMETRY [LARGE SCALE ANALYSIS]</scope>
</reference>
<reference key="8">
    <citation type="journal article" date="2014" name="J. Proteomics">
        <title>An enzyme assisted RP-RPLC approach for in-depth analysis of human liver phosphoproteome.</title>
        <authorList>
            <person name="Bian Y."/>
            <person name="Song C."/>
            <person name="Cheng K."/>
            <person name="Dong M."/>
            <person name="Wang F."/>
            <person name="Huang J."/>
            <person name="Sun D."/>
            <person name="Wang L."/>
            <person name="Ye M."/>
            <person name="Zou H."/>
        </authorList>
    </citation>
    <scope>IDENTIFICATION BY MASS SPECTROMETRY [LARGE SCALE ANALYSIS]</scope>
    <source>
        <tissue>Liver</tissue>
    </source>
</reference>
<reference key="9">
    <citation type="journal article" date="2015" name="Proteomics">
        <title>N-terminome analysis of the human mitochondrial proteome.</title>
        <authorList>
            <person name="Vaca Jacome A.S."/>
            <person name="Rabilloud T."/>
            <person name="Schaeffer-Reiss C."/>
            <person name="Rompais M."/>
            <person name="Ayoub D."/>
            <person name="Lane L."/>
            <person name="Bairoch A."/>
            <person name="Van Dorsselaer A."/>
            <person name="Carapito C."/>
        </authorList>
    </citation>
    <scope>IDENTIFICATION BY MASS SPECTROMETRY [LARGE SCALE ANALYSIS]</scope>
</reference>
<proteinExistence type="evidence at protein level"/>
<evidence type="ECO:0000250" key="1"/>
<evidence type="ECO:0000250" key="2">
    <source>
        <dbReference type="UniProtKB" id="Q78P75"/>
    </source>
</evidence>
<evidence type="ECO:0000250" key="3">
    <source>
        <dbReference type="UniProtKB" id="Q9D0M5"/>
    </source>
</evidence>
<evidence type="ECO:0000269" key="4">
    <source>
    </source>
</evidence>
<evidence type="ECO:0000269" key="5">
    <source>
    </source>
</evidence>
<evidence type="ECO:0000305" key="6"/>
<evidence type="ECO:0007829" key="7">
    <source>
        <dbReference type="PDB" id="2XQQ"/>
    </source>
</evidence>
<evidence type="ECO:0007829" key="8">
    <source>
        <dbReference type="PDB" id="4D07"/>
    </source>
</evidence>
<gene>
    <name type="primary">DYNLL2</name>
    <name type="synonym">DLC2</name>
</gene>